<gene>
    <name type="primary">ZNF586</name>
</gene>
<feature type="chain" id="PRO_0000241449" description="Zinc finger protein 586">
    <location>
        <begin position="1"/>
        <end position="402"/>
    </location>
</feature>
<feature type="domain" description="KRAB" evidence="2">
    <location>
        <begin position="15"/>
        <end position="87"/>
    </location>
</feature>
<feature type="zinc finger region" description="C2H2-type 1; degenerate" evidence="1">
    <location>
        <begin position="88"/>
        <end position="116"/>
    </location>
</feature>
<feature type="zinc finger region" description="C2H2-type 2; degenerate" evidence="1">
    <location>
        <begin position="122"/>
        <end position="144"/>
    </location>
</feature>
<feature type="zinc finger region" description="C2H2-type 3; degenerate" evidence="1">
    <location>
        <begin position="150"/>
        <end position="172"/>
    </location>
</feature>
<feature type="zinc finger region" description="C2H2-type 4" evidence="1">
    <location>
        <begin position="178"/>
        <end position="200"/>
    </location>
</feature>
<feature type="zinc finger region" description="C2H2-type 5" evidence="1">
    <location>
        <begin position="206"/>
        <end position="228"/>
    </location>
</feature>
<feature type="zinc finger region" description="C2H2-type 6" evidence="1">
    <location>
        <begin position="234"/>
        <end position="256"/>
    </location>
</feature>
<feature type="zinc finger region" description="C2H2-type 7" evidence="1">
    <location>
        <begin position="262"/>
        <end position="284"/>
    </location>
</feature>
<feature type="zinc finger region" description="C2H2-type 8" evidence="1">
    <location>
        <begin position="290"/>
        <end position="312"/>
    </location>
</feature>
<feature type="zinc finger region" description="C2H2-type 9" evidence="1">
    <location>
        <begin position="317"/>
        <end position="339"/>
    </location>
</feature>
<feature type="zinc finger region" description="C2H2-type 10" evidence="1">
    <location>
        <begin position="345"/>
        <end position="367"/>
    </location>
</feature>
<feature type="zinc finger region" description="C2H2-type 11" evidence="1">
    <location>
        <begin position="373"/>
        <end position="395"/>
    </location>
</feature>
<feature type="splice variant" id="VSP_044808" description="In isoform 3." evidence="3">
    <location>
        <begin position="1"/>
        <end position="43"/>
    </location>
</feature>
<feature type="splice variant" id="VSP_043420" description="In isoform 2." evidence="4">
    <original>SSVTFEDVAVNFSLEEWSLLNEAQRCLYRDVMLETLTLISSLGCWHGGEDEAAPSKQSTCIHIYKDQGGHSGERPYECGEYRKLFKNKSCLTEPRRDHKHRNVRTGERPYECSKYGKLFHQKPTLHIHERFHTGQKTYECSECGKSFHQSSSLLQRQTLHTRERPYECIECGKAFAEKSSLINHRKVHSGAKRYECNE</original>
    <variation>VVGMEGKMRQHLLSRARVYIYTKTREVIVEKGLMSVGNIGNYLRTSPASLNPEEITNTGMFALEKGLMSAANMGNYFTKSLHSIFMRDFILGKRPMSAVSVENHFTKALHSCSVRHFTLEKGLMSVLNVGKPLLKSPVSLTTGKFTLEQSVMNAMNVGSPLLIHLVSLNTGGFTLERGLMSAVNVGDPLLKTPVLLNT</variation>
    <location>
        <begin position="13"/>
        <end position="210"/>
    </location>
</feature>
<feature type="splice variant" id="VSP_043421" description="In isoform 2." evidence="4">
    <location>
        <begin position="211"/>
        <end position="402"/>
    </location>
</feature>
<feature type="sequence conflict" description="In Ref. 1; BAG63522." evidence="5" ref="1">
    <original>I</original>
    <variation>T</variation>
    <location>
        <position position="306"/>
    </location>
</feature>
<feature type="sequence conflict" description="In Ref. 1; BAA90930." evidence="5" ref="1">
    <original>E</original>
    <variation>G</variation>
    <location>
        <position position="370"/>
    </location>
</feature>
<feature type="sequence conflict" description="In Ref. 1; BAA90930." evidence="5" ref="1">
    <original>R</original>
    <variation>G</variation>
    <location>
        <position position="393"/>
    </location>
</feature>
<keyword id="KW-0025">Alternative splicing</keyword>
<keyword id="KW-0238">DNA-binding</keyword>
<keyword id="KW-0479">Metal-binding</keyword>
<keyword id="KW-0539">Nucleus</keyword>
<keyword id="KW-1267">Proteomics identification</keyword>
<keyword id="KW-1185">Reference proteome</keyword>
<keyword id="KW-0677">Repeat</keyword>
<keyword id="KW-0804">Transcription</keyword>
<keyword id="KW-0805">Transcription regulation</keyword>
<keyword id="KW-0862">Zinc</keyword>
<keyword id="KW-0863">Zinc-finger</keyword>
<sequence length="402" mass="46413">MAAAAALRAPAQSSVTFEDVAVNFSLEEWSLLNEAQRCLYRDVMLETLTLISSLGCWHGGEDEAAPSKQSTCIHIYKDQGGHSGERPYECGEYRKLFKNKSCLTEPRRDHKHRNVRTGERPYECSKYGKLFHQKPTLHIHERFHTGQKTYECSECGKSFHQSSSLLQRQTLHTRERPYECIECGKAFAEKSSLINHRKVHSGAKRYECNECGKSFAYTSSLIKHRRIHTGERPYECSECGRSFAENSSLIKHLRVHTGERPYECVECGKSFRRSSSLLQHQRVHTRERPYECSECGKSFSLRSNLIHHQRVHTGERHECGQCGKSFSRKSSLIIHLRVHTGERPYECSDCGKSFAENSSLIKHLRVHTGERPYECIDCGKSFRHSSSFRRHQRVHTGMRPYK</sequence>
<accession>Q9NXT0</accession>
<accession>A0JLV8</accession>
<accession>A8MY63</accession>
<accession>B3KTS9</accession>
<accession>E7ERT1</accession>
<accession>G3XAH3</accession>
<name>ZN586_HUMAN</name>
<reference key="1">
    <citation type="journal article" date="2004" name="Nat. Genet.">
        <title>Complete sequencing and characterization of 21,243 full-length human cDNAs.</title>
        <authorList>
            <person name="Ota T."/>
            <person name="Suzuki Y."/>
            <person name="Nishikawa T."/>
            <person name="Otsuki T."/>
            <person name="Sugiyama T."/>
            <person name="Irie R."/>
            <person name="Wakamatsu A."/>
            <person name="Hayashi K."/>
            <person name="Sato H."/>
            <person name="Nagai K."/>
            <person name="Kimura K."/>
            <person name="Makita H."/>
            <person name="Sekine M."/>
            <person name="Obayashi M."/>
            <person name="Nishi T."/>
            <person name="Shibahara T."/>
            <person name="Tanaka T."/>
            <person name="Ishii S."/>
            <person name="Yamamoto J."/>
            <person name="Saito K."/>
            <person name="Kawai Y."/>
            <person name="Isono Y."/>
            <person name="Nakamura Y."/>
            <person name="Nagahari K."/>
            <person name="Murakami K."/>
            <person name="Yasuda T."/>
            <person name="Iwayanagi T."/>
            <person name="Wagatsuma M."/>
            <person name="Shiratori A."/>
            <person name="Sudo H."/>
            <person name="Hosoiri T."/>
            <person name="Kaku Y."/>
            <person name="Kodaira H."/>
            <person name="Kondo H."/>
            <person name="Sugawara M."/>
            <person name="Takahashi M."/>
            <person name="Kanda K."/>
            <person name="Yokoi T."/>
            <person name="Furuya T."/>
            <person name="Kikkawa E."/>
            <person name="Omura Y."/>
            <person name="Abe K."/>
            <person name="Kamihara K."/>
            <person name="Katsuta N."/>
            <person name="Sato K."/>
            <person name="Tanikawa M."/>
            <person name="Yamazaki M."/>
            <person name="Ninomiya K."/>
            <person name="Ishibashi T."/>
            <person name="Yamashita H."/>
            <person name="Murakawa K."/>
            <person name="Fujimori K."/>
            <person name="Tanai H."/>
            <person name="Kimata M."/>
            <person name="Watanabe M."/>
            <person name="Hiraoka S."/>
            <person name="Chiba Y."/>
            <person name="Ishida S."/>
            <person name="Ono Y."/>
            <person name="Takiguchi S."/>
            <person name="Watanabe S."/>
            <person name="Yosida M."/>
            <person name="Hotuta T."/>
            <person name="Kusano J."/>
            <person name="Kanehori K."/>
            <person name="Takahashi-Fujii A."/>
            <person name="Hara H."/>
            <person name="Tanase T.-O."/>
            <person name="Nomura Y."/>
            <person name="Togiya S."/>
            <person name="Komai F."/>
            <person name="Hara R."/>
            <person name="Takeuchi K."/>
            <person name="Arita M."/>
            <person name="Imose N."/>
            <person name="Musashino K."/>
            <person name="Yuuki H."/>
            <person name="Oshima A."/>
            <person name="Sasaki N."/>
            <person name="Aotsuka S."/>
            <person name="Yoshikawa Y."/>
            <person name="Matsunawa H."/>
            <person name="Ichihara T."/>
            <person name="Shiohata N."/>
            <person name="Sano S."/>
            <person name="Moriya S."/>
            <person name="Momiyama H."/>
            <person name="Satoh N."/>
            <person name="Takami S."/>
            <person name="Terashima Y."/>
            <person name="Suzuki O."/>
            <person name="Nakagawa S."/>
            <person name="Senoh A."/>
            <person name="Mizoguchi H."/>
            <person name="Goto Y."/>
            <person name="Shimizu F."/>
            <person name="Wakebe H."/>
            <person name="Hishigaki H."/>
            <person name="Watanabe T."/>
            <person name="Sugiyama A."/>
            <person name="Takemoto M."/>
            <person name="Kawakami B."/>
            <person name="Yamazaki M."/>
            <person name="Watanabe K."/>
            <person name="Kumagai A."/>
            <person name="Itakura S."/>
            <person name="Fukuzumi Y."/>
            <person name="Fujimori Y."/>
            <person name="Komiyama M."/>
            <person name="Tashiro H."/>
            <person name="Tanigami A."/>
            <person name="Fujiwara T."/>
            <person name="Ono T."/>
            <person name="Yamada K."/>
            <person name="Fujii Y."/>
            <person name="Ozaki K."/>
            <person name="Hirao M."/>
            <person name="Ohmori Y."/>
            <person name="Kawabata A."/>
            <person name="Hikiji T."/>
            <person name="Kobatake N."/>
            <person name="Inagaki H."/>
            <person name="Ikema Y."/>
            <person name="Okamoto S."/>
            <person name="Okitani R."/>
            <person name="Kawakami T."/>
            <person name="Noguchi S."/>
            <person name="Itoh T."/>
            <person name="Shigeta K."/>
            <person name="Senba T."/>
            <person name="Matsumura K."/>
            <person name="Nakajima Y."/>
            <person name="Mizuno T."/>
            <person name="Morinaga M."/>
            <person name="Sasaki M."/>
            <person name="Togashi T."/>
            <person name="Oyama M."/>
            <person name="Hata H."/>
            <person name="Watanabe M."/>
            <person name="Komatsu T."/>
            <person name="Mizushima-Sugano J."/>
            <person name="Satoh T."/>
            <person name="Shirai Y."/>
            <person name="Takahashi Y."/>
            <person name="Nakagawa K."/>
            <person name="Okumura K."/>
            <person name="Nagase T."/>
            <person name="Nomura N."/>
            <person name="Kikuchi H."/>
            <person name="Masuho Y."/>
            <person name="Yamashita R."/>
            <person name="Nakai K."/>
            <person name="Yada T."/>
            <person name="Nakamura Y."/>
            <person name="Ohara O."/>
            <person name="Isogai T."/>
            <person name="Sugano S."/>
        </authorList>
    </citation>
    <scope>NUCLEOTIDE SEQUENCE [LARGE SCALE MRNA] (ISOFORMS 1 AND 3)</scope>
    <source>
        <tissue>Colon</tissue>
        <tissue>Testis</tissue>
    </source>
</reference>
<reference key="2">
    <citation type="journal article" date="2004" name="Nature">
        <title>The DNA sequence and biology of human chromosome 19.</title>
        <authorList>
            <person name="Grimwood J."/>
            <person name="Gordon L.A."/>
            <person name="Olsen A.S."/>
            <person name="Terry A."/>
            <person name="Schmutz J."/>
            <person name="Lamerdin J.E."/>
            <person name="Hellsten U."/>
            <person name="Goodstein D."/>
            <person name="Couronne O."/>
            <person name="Tran-Gyamfi M."/>
            <person name="Aerts A."/>
            <person name="Altherr M."/>
            <person name="Ashworth L."/>
            <person name="Bajorek E."/>
            <person name="Black S."/>
            <person name="Branscomb E."/>
            <person name="Caenepeel S."/>
            <person name="Carrano A.V."/>
            <person name="Caoile C."/>
            <person name="Chan Y.M."/>
            <person name="Christensen M."/>
            <person name="Cleland C.A."/>
            <person name="Copeland A."/>
            <person name="Dalin E."/>
            <person name="Dehal P."/>
            <person name="Denys M."/>
            <person name="Detter J.C."/>
            <person name="Escobar J."/>
            <person name="Flowers D."/>
            <person name="Fotopulos D."/>
            <person name="Garcia C."/>
            <person name="Georgescu A.M."/>
            <person name="Glavina T."/>
            <person name="Gomez M."/>
            <person name="Gonzales E."/>
            <person name="Groza M."/>
            <person name="Hammon N."/>
            <person name="Hawkins T."/>
            <person name="Haydu L."/>
            <person name="Ho I."/>
            <person name="Huang W."/>
            <person name="Israni S."/>
            <person name="Jett J."/>
            <person name="Kadner K."/>
            <person name="Kimball H."/>
            <person name="Kobayashi A."/>
            <person name="Larionov V."/>
            <person name="Leem S.-H."/>
            <person name="Lopez F."/>
            <person name="Lou Y."/>
            <person name="Lowry S."/>
            <person name="Malfatti S."/>
            <person name="Martinez D."/>
            <person name="McCready P.M."/>
            <person name="Medina C."/>
            <person name="Morgan J."/>
            <person name="Nelson K."/>
            <person name="Nolan M."/>
            <person name="Ovcharenko I."/>
            <person name="Pitluck S."/>
            <person name="Pollard M."/>
            <person name="Popkie A.P."/>
            <person name="Predki P."/>
            <person name="Quan G."/>
            <person name="Ramirez L."/>
            <person name="Rash S."/>
            <person name="Retterer J."/>
            <person name="Rodriguez A."/>
            <person name="Rogers S."/>
            <person name="Salamov A."/>
            <person name="Salazar A."/>
            <person name="She X."/>
            <person name="Smith D."/>
            <person name="Slezak T."/>
            <person name="Solovyev V."/>
            <person name="Thayer N."/>
            <person name="Tice H."/>
            <person name="Tsai M."/>
            <person name="Ustaszewska A."/>
            <person name="Vo N."/>
            <person name="Wagner M."/>
            <person name="Wheeler J."/>
            <person name="Wu K."/>
            <person name="Xie G."/>
            <person name="Yang J."/>
            <person name="Dubchak I."/>
            <person name="Furey T.S."/>
            <person name="DeJong P."/>
            <person name="Dickson M."/>
            <person name="Gordon D."/>
            <person name="Eichler E.E."/>
            <person name="Pennacchio L.A."/>
            <person name="Richardson P."/>
            <person name="Stubbs L."/>
            <person name="Rokhsar D.S."/>
            <person name="Myers R.M."/>
            <person name="Rubin E.M."/>
            <person name="Lucas S.M."/>
        </authorList>
    </citation>
    <scope>NUCLEOTIDE SEQUENCE [LARGE SCALE GENOMIC DNA]</scope>
</reference>
<reference key="3">
    <citation type="submission" date="2005-07" db="EMBL/GenBank/DDBJ databases">
        <authorList>
            <person name="Mural R.J."/>
            <person name="Istrail S."/>
            <person name="Sutton G.G."/>
            <person name="Florea L."/>
            <person name="Halpern A.L."/>
            <person name="Mobarry C.M."/>
            <person name="Lippert R."/>
            <person name="Walenz B."/>
            <person name="Shatkay H."/>
            <person name="Dew I."/>
            <person name="Miller J.R."/>
            <person name="Flanigan M.J."/>
            <person name="Edwards N.J."/>
            <person name="Bolanos R."/>
            <person name="Fasulo D."/>
            <person name="Halldorsson B.V."/>
            <person name="Hannenhalli S."/>
            <person name="Turner R."/>
            <person name="Yooseph S."/>
            <person name="Lu F."/>
            <person name="Nusskern D.R."/>
            <person name="Shue B.C."/>
            <person name="Zheng X.H."/>
            <person name="Zhong F."/>
            <person name="Delcher A.L."/>
            <person name="Huson D.H."/>
            <person name="Kravitz S.A."/>
            <person name="Mouchard L."/>
            <person name="Reinert K."/>
            <person name="Remington K.A."/>
            <person name="Clark A.G."/>
            <person name="Waterman M.S."/>
            <person name="Eichler E.E."/>
            <person name="Adams M.D."/>
            <person name="Hunkapiller M.W."/>
            <person name="Myers E.W."/>
            <person name="Venter J.C."/>
        </authorList>
    </citation>
    <scope>NUCLEOTIDE SEQUENCE [LARGE SCALE GENOMIC DNA]</scope>
</reference>
<reference key="4">
    <citation type="journal article" date="2004" name="Genome Res.">
        <title>The status, quality, and expansion of the NIH full-length cDNA project: the Mammalian Gene Collection (MGC).</title>
        <authorList>
            <consortium name="The MGC Project Team"/>
        </authorList>
    </citation>
    <scope>NUCLEOTIDE SEQUENCE [LARGE SCALE MRNA] (ISOFORM 2)</scope>
</reference>
<protein>
    <recommendedName>
        <fullName>Zinc finger protein 586</fullName>
    </recommendedName>
</protein>
<evidence type="ECO:0000255" key="1">
    <source>
        <dbReference type="PROSITE-ProRule" id="PRU00042"/>
    </source>
</evidence>
<evidence type="ECO:0000255" key="2">
    <source>
        <dbReference type="PROSITE-ProRule" id="PRU00119"/>
    </source>
</evidence>
<evidence type="ECO:0000303" key="3">
    <source>
    </source>
</evidence>
<evidence type="ECO:0000303" key="4">
    <source>
    </source>
</evidence>
<evidence type="ECO:0000305" key="5"/>
<proteinExistence type="evidence at protein level"/>
<dbReference type="EMBL" id="AK000077">
    <property type="protein sequence ID" value="BAA90930.1"/>
    <property type="status" value="ALT_FRAME"/>
    <property type="molecule type" value="mRNA"/>
</dbReference>
<dbReference type="EMBL" id="AK095993">
    <property type="protein sequence ID" value="BAG53191.1"/>
    <property type="molecule type" value="mRNA"/>
</dbReference>
<dbReference type="EMBL" id="AK302151">
    <property type="protein sequence ID" value="BAG63522.1"/>
    <property type="molecule type" value="mRNA"/>
</dbReference>
<dbReference type="EMBL" id="AC003006">
    <property type="status" value="NOT_ANNOTATED_CDS"/>
    <property type="molecule type" value="Genomic_DNA"/>
</dbReference>
<dbReference type="EMBL" id="AC010645">
    <property type="status" value="NOT_ANNOTATED_CDS"/>
    <property type="molecule type" value="Genomic_DNA"/>
</dbReference>
<dbReference type="EMBL" id="AC093037">
    <property type="status" value="NOT_ANNOTATED_CDS"/>
    <property type="molecule type" value="Genomic_DNA"/>
</dbReference>
<dbReference type="EMBL" id="CH471135">
    <property type="protein sequence ID" value="EAW72533.1"/>
    <property type="molecule type" value="Genomic_DNA"/>
</dbReference>
<dbReference type="EMBL" id="CH471135">
    <property type="protein sequence ID" value="EAW72534.1"/>
    <property type="molecule type" value="Genomic_DNA"/>
</dbReference>
<dbReference type="EMBL" id="BC124558">
    <property type="protein sequence ID" value="AAI24559.2"/>
    <property type="molecule type" value="mRNA"/>
</dbReference>
<dbReference type="CCDS" id="CCDS42640.1">
    <molecule id="Q9NXT0-1"/>
</dbReference>
<dbReference type="CCDS" id="CCDS56107.1">
    <molecule id="Q9NXT0-2"/>
</dbReference>
<dbReference type="CCDS" id="CCDS56108.1">
    <molecule id="Q9NXT0-3"/>
</dbReference>
<dbReference type="RefSeq" id="NP_001070894.1">
    <molecule id="Q9NXT0-2"/>
    <property type="nucleotide sequence ID" value="NM_001077426.3"/>
</dbReference>
<dbReference type="RefSeq" id="NP_001191743.1">
    <molecule id="Q9NXT0-3"/>
    <property type="nucleotide sequence ID" value="NM_001204814.2"/>
</dbReference>
<dbReference type="RefSeq" id="NP_060122.2">
    <molecule id="Q9NXT0-1"/>
    <property type="nucleotide sequence ID" value="NM_017652.4"/>
</dbReference>
<dbReference type="SMR" id="Q9NXT0"/>
<dbReference type="BioGRID" id="120164">
    <property type="interactions" value="5"/>
</dbReference>
<dbReference type="FunCoup" id="Q9NXT0">
    <property type="interactions" value="96"/>
</dbReference>
<dbReference type="IntAct" id="Q9NXT0">
    <property type="interactions" value="5"/>
</dbReference>
<dbReference type="STRING" id="9606.ENSP00000379458"/>
<dbReference type="iPTMnet" id="Q9NXT0"/>
<dbReference type="PhosphoSitePlus" id="Q9NXT0"/>
<dbReference type="BioMuta" id="ZNF586"/>
<dbReference type="DMDM" id="215273915"/>
<dbReference type="jPOST" id="Q9NXT0"/>
<dbReference type="MassIVE" id="Q9NXT0"/>
<dbReference type="PaxDb" id="9606-ENSP00000379458"/>
<dbReference type="PeptideAtlas" id="Q9NXT0"/>
<dbReference type="ProteomicsDB" id="33749"/>
<dbReference type="ProteomicsDB" id="83134">
    <molecule id="Q9NXT0-1"/>
</dbReference>
<dbReference type="ProteomicsDB" id="83135">
    <molecule id="Q9NXT0-2"/>
</dbReference>
<dbReference type="Antibodypedia" id="52690">
    <property type="antibodies" value="54 antibodies from 11 providers"/>
</dbReference>
<dbReference type="DNASU" id="54807"/>
<dbReference type="Ensembl" id="ENST00000391702.3">
    <molecule id="Q9NXT0-3"/>
    <property type="protein sequence ID" value="ENSP00000375583.3"/>
    <property type="gene ID" value="ENSG00000083828.16"/>
</dbReference>
<dbReference type="Ensembl" id="ENST00000396150.4">
    <molecule id="Q9NXT0-2"/>
    <property type="protein sequence ID" value="ENSP00000379454.3"/>
    <property type="gene ID" value="ENSG00000083828.16"/>
</dbReference>
<dbReference type="Ensembl" id="ENST00000396154.7">
    <molecule id="Q9NXT0-1"/>
    <property type="protein sequence ID" value="ENSP00000379458.1"/>
    <property type="gene ID" value="ENSG00000083828.16"/>
</dbReference>
<dbReference type="GeneID" id="54807"/>
<dbReference type="KEGG" id="hsa:54807"/>
<dbReference type="MANE-Select" id="ENST00000396154.7">
    <property type="protein sequence ID" value="ENSP00000379458.1"/>
    <property type="RefSeq nucleotide sequence ID" value="NM_017652.4"/>
    <property type="RefSeq protein sequence ID" value="NP_060122.2"/>
</dbReference>
<dbReference type="UCSC" id="uc002qqd.4">
    <molecule id="Q9NXT0-1"/>
    <property type="organism name" value="human"/>
</dbReference>
<dbReference type="AGR" id="HGNC:25949"/>
<dbReference type="CTD" id="54807"/>
<dbReference type="GeneCards" id="ZNF586"/>
<dbReference type="HGNC" id="HGNC:25949">
    <property type="gene designation" value="ZNF586"/>
</dbReference>
<dbReference type="HPA" id="ENSG00000083828">
    <property type="expression patterns" value="Low tissue specificity"/>
</dbReference>
<dbReference type="neXtProt" id="NX_Q9NXT0"/>
<dbReference type="OpenTargets" id="ENSG00000083828"/>
<dbReference type="PharmGKB" id="PA134946358"/>
<dbReference type="VEuPathDB" id="HostDB:ENSG00000083828"/>
<dbReference type="eggNOG" id="KOG1721">
    <property type="taxonomic scope" value="Eukaryota"/>
</dbReference>
<dbReference type="GeneTree" id="ENSGT00940000164743"/>
<dbReference type="HOGENOM" id="CLU_002678_2_1_1"/>
<dbReference type="InParanoid" id="Q9NXT0"/>
<dbReference type="OMA" id="NYGKLFH"/>
<dbReference type="OrthoDB" id="6591996at2759"/>
<dbReference type="PAN-GO" id="Q9NXT0">
    <property type="GO annotations" value="4 GO annotations based on evolutionary models"/>
</dbReference>
<dbReference type="PhylomeDB" id="Q9NXT0"/>
<dbReference type="TreeFam" id="TF339848"/>
<dbReference type="PathwayCommons" id="Q9NXT0"/>
<dbReference type="Reactome" id="R-HSA-212436">
    <property type="pathway name" value="Generic Transcription Pathway"/>
</dbReference>
<dbReference type="SignaLink" id="Q9NXT0"/>
<dbReference type="BioGRID-ORCS" id="54807">
    <property type="hits" value="14 hits in 1177 CRISPR screens"/>
</dbReference>
<dbReference type="ChiTaRS" id="ZNF586">
    <property type="organism name" value="human"/>
</dbReference>
<dbReference type="GenomeRNAi" id="54807"/>
<dbReference type="Pharos" id="Q9NXT0">
    <property type="development level" value="Tdark"/>
</dbReference>
<dbReference type="PRO" id="PR:Q9NXT0"/>
<dbReference type="Proteomes" id="UP000005640">
    <property type="component" value="Chromosome 19"/>
</dbReference>
<dbReference type="RNAct" id="Q9NXT0">
    <property type="molecule type" value="protein"/>
</dbReference>
<dbReference type="Bgee" id="ENSG00000083828">
    <property type="expression patterns" value="Expressed in secondary oocyte and 135 other cell types or tissues"/>
</dbReference>
<dbReference type="ExpressionAtlas" id="Q9NXT0">
    <property type="expression patterns" value="baseline and differential"/>
</dbReference>
<dbReference type="GO" id="GO:0005634">
    <property type="term" value="C:nucleus"/>
    <property type="evidence" value="ECO:0000318"/>
    <property type="project" value="GO_Central"/>
</dbReference>
<dbReference type="GO" id="GO:0000981">
    <property type="term" value="F:DNA-binding transcription factor activity, RNA polymerase II-specific"/>
    <property type="evidence" value="ECO:0000318"/>
    <property type="project" value="GO_Central"/>
</dbReference>
<dbReference type="GO" id="GO:0000978">
    <property type="term" value="F:RNA polymerase II cis-regulatory region sequence-specific DNA binding"/>
    <property type="evidence" value="ECO:0000318"/>
    <property type="project" value="GO_Central"/>
</dbReference>
<dbReference type="GO" id="GO:0008270">
    <property type="term" value="F:zinc ion binding"/>
    <property type="evidence" value="ECO:0007669"/>
    <property type="project" value="UniProtKB-KW"/>
</dbReference>
<dbReference type="GO" id="GO:0006357">
    <property type="term" value="P:regulation of transcription by RNA polymerase II"/>
    <property type="evidence" value="ECO:0000318"/>
    <property type="project" value="GO_Central"/>
</dbReference>
<dbReference type="CDD" id="cd07765">
    <property type="entry name" value="KRAB_A-box"/>
    <property type="match status" value="1"/>
</dbReference>
<dbReference type="FunFam" id="3.30.160.60:FF:000012">
    <property type="entry name" value="RB-associated KRAB zinc finger protein-like"/>
    <property type="match status" value="1"/>
</dbReference>
<dbReference type="FunFam" id="3.30.160.60:FF:000249">
    <property type="entry name" value="Zinc finger protein 154"/>
    <property type="match status" value="2"/>
</dbReference>
<dbReference type="FunFam" id="3.30.160.60:FF:000295">
    <property type="entry name" value="zinc finger protein 19"/>
    <property type="match status" value="1"/>
</dbReference>
<dbReference type="FunFam" id="3.30.160.60:FF:000352">
    <property type="entry name" value="zinc finger protein 3 homolog"/>
    <property type="match status" value="1"/>
</dbReference>
<dbReference type="FunFam" id="3.30.160.60:FF:000127">
    <property type="entry name" value="Zinc finger protein 354C"/>
    <property type="match status" value="1"/>
</dbReference>
<dbReference type="FunFam" id="3.30.160.60:FF:000098">
    <property type="entry name" value="Zinc finger protein 614"/>
    <property type="match status" value="3"/>
</dbReference>
<dbReference type="FunFam" id="3.30.160.60:FF:002533">
    <property type="entry name" value="Zinc finger protein 770"/>
    <property type="match status" value="1"/>
</dbReference>
<dbReference type="Gene3D" id="6.10.140.140">
    <property type="match status" value="1"/>
</dbReference>
<dbReference type="Gene3D" id="3.30.160.60">
    <property type="entry name" value="Classic Zinc Finger"/>
    <property type="match status" value="11"/>
</dbReference>
<dbReference type="InterPro" id="IPR050717">
    <property type="entry name" value="C2H2-ZF_Transcription_Reg"/>
</dbReference>
<dbReference type="InterPro" id="IPR001909">
    <property type="entry name" value="KRAB"/>
</dbReference>
<dbReference type="InterPro" id="IPR036051">
    <property type="entry name" value="KRAB_dom_sf"/>
</dbReference>
<dbReference type="InterPro" id="IPR036236">
    <property type="entry name" value="Znf_C2H2_sf"/>
</dbReference>
<dbReference type="InterPro" id="IPR013087">
    <property type="entry name" value="Znf_C2H2_type"/>
</dbReference>
<dbReference type="PANTHER" id="PTHR14196">
    <property type="entry name" value="ODD-SKIPPED - RELATED"/>
    <property type="match status" value="1"/>
</dbReference>
<dbReference type="PANTHER" id="PTHR14196:SF12">
    <property type="entry name" value="ZINC FINGER PROTEIN 208-LIKE"/>
    <property type="match status" value="1"/>
</dbReference>
<dbReference type="Pfam" id="PF01352">
    <property type="entry name" value="KRAB"/>
    <property type="match status" value="1"/>
</dbReference>
<dbReference type="Pfam" id="PF00096">
    <property type="entry name" value="zf-C2H2"/>
    <property type="match status" value="9"/>
</dbReference>
<dbReference type="SMART" id="SM00349">
    <property type="entry name" value="KRAB"/>
    <property type="match status" value="1"/>
</dbReference>
<dbReference type="SMART" id="SM00355">
    <property type="entry name" value="ZnF_C2H2"/>
    <property type="match status" value="10"/>
</dbReference>
<dbReference type="SUPFAM" id="SSF57667">
    <property type="entry name" value="beta-beta-alpha zinc fingers"/>
    <property type="match status" value="7"/>
</dbReference>
<dbReference type="SUPFAM" id="SSF109640">
    <property type="entry name" value="KRAB domain (Kruppel-associated box)"/>
    <property type="match status" value="1"/>
</dbReference>
<dbReference type="PROSITE" id="PS50805">
    <property type="entry name" value="KRAB"/>
    <property type="match status" value="1"/>
</dbReference>
<dbReference type="PROSITE" id="PS00028">
    <property type="entry name" value="ZINC_FINGER_C2H2_1"/>
    <property type="match status" value="8"/>
</dbReference>
<dbReference type="PROSITE" id="PS50157">
    <property type="entry name" value="ZINC_FINGER_C2H2_2"/>
    <property type="match status" value="10"/>
</dbReference>
<organism>
    <name type="scientific">Homo sapiens</name>
    <name type="common">Human</name>
    <dbReference type="NCBI Taxonomy" id="9606"/>
    <lineage>
        <taxon>Eukaryota</taxon>
        <taxon>Metazoa</taxon>
        <taxon>Chordata</taxon>
        <taxon>Craniata</taxon>
        <taxon>Vertebrata</taxon>
        <taxon>Euteleostomi</taxon>
        <taxon>Mammalia</taxon>
        <taxon>Eutheria</taxon>
        <taxon>Euarchontoglires</taxon>
        <taxon>Primates</taxon>
        <taxon>Haplorrhini</taxon>
        <taxon>Catarrhini</taxon>
        <taxon>Hominidae</taxon>
        <taxon>Homo</taxon>
    </lineage>
</organism>
<comment type="function">
    <text>May be involved in transcriptional regulation.</text>
</comment>
<comment type="subcellular location">
    <subcellularLocation>
        <location evidence="5">Nucleus</location>
    </subcellularLocation>
</comment>
<comment type="alternative products">
    <event type="alternative splicing"/>
    <isoform>
        <id>Q9NXT0-1</id>
        <name>1</name>
        <sequence type="displayed"/>
    </isoform>
    <isoform>
        <id>Q9NXT0-2</id>
        <name>2</name>
        <sequence type="described" ref="VSP_043420 VSP_043421"/>
    </isoform>
    <isoform>
        <id>Q9NXT0-3</id>
        <name>3</name>
        <sequence type="described" ref="VSP_044808"/>
    </isoform>
</comment>
<comment type="similarity">
    <text evidence="5">Belongs to the krueppel C2H2-type zinc-finger protein family.</text>
</comment>
<comment type="sequence caution" evidence="5">
    <conflict type="frameshift">
        <sequence resource="EMBL-CDS" id="BAA90930"/>
    </conflict>
</comment>